<gene>
    <name evidence="1" type="primary">lepA</name>
    <name type="ordered locus">ABAYE0938</name>
</gene>
<sequence length="605" mass="66658">MAQAKKSVDIKNIRNFSIIAHIDHGKSTLADRFIQMCGGLQDREMQAQVLDSMELERERGITIKAASVTLYYTHPNGQEYQLNFIDTPGHVDFSYEVSRSLAACEGALLVVDAAQGVEAQSVANCYTAIEQGLEVLPILNKIDLPQAEPERVIHEIEEIIGIEATNAPTCSAKTGLGVEGVLETLVDVIPAPTGDREAPLQALIIDSWFDNYLGVVSLVRIKDGRIRKGDKMLVKSTGQTHIVTSVGVFNPKHTETGVLEAGEVGFVIAGIKDIFGAPVGDTITLSTTPEVASLPGFKKVKPQVYAGLFPIDASDFEPFREALQKLQINDSALFFEPESSDALGFGFRCGFLGMLHMEIVQERLEREYDLDLISSAPTVVYEAVTKKGDTIYIDSPSKMPDGSVVEDLREPIAECHILVPQEYLGNVMTLCIERRGVQKDMKFLGNQVSITFEIPMAEVVMDFFDKLKSCSRGFASLDYNFIRFESSSLVKVDVLINGEKVDALAMICHRNDARHRGIALVEKMKDLIPRQMFDVAIQAAIGAQIIARSTVKAMRKNVLAKCYGGDVSRKKKLLAKQKEGKKRMKQVGSVEIPQEAFLAVLKVER</sequence>
<dbReference type="EC" id="3.6.5.n1" evidence="1"/>
<dbReference type="EMBL" id="CU459141">
    <property type="protein sequence ID" value="CAM85883.1"/>
    <property type="molecule type" value="Genomic_DNA"/>
</dbReference>
<dbReference type="RefSeq" id="WP_000035781.1">
    <property type="nucleotide sequence ID" value="NZ_JBDGFB010000021.1"/>
</dbReference>
<dbReference type="SMR" id="B0VCT7"/>
<dbReference type="EnsemblBacteria" id="CAM85883">
    <property type="protein sequence ID" value="CAM85883"/>
    <property type="gene ID" value="ABAYE0938"/>
</dbReference>
<dbReference type="GeneID" id="92894832"/>
<dbReference type="KEGG" id="aby:ABAYE0938"/>
<dbReference type="HOGENOM" id="CLU_009995_3_3_6"/>
<dbReference type="GO" id="GO:0005886">
    <property type="term" value="C:plasma membrane"/>
    <property type="evidence" value="ECO:0007669"/>
    <property type="project" value="UniProtKB-SubCell"/>
</dbReference>
<dbReference type="GO" id="GO:0005525">
    <property type="term" value="F:GTP binding"/>
    <property type="evidence" value="ECO:0007669"/>
    <property type="project" value="UniProtKB-UniRule"/>
</dbReference>
<dbReference type="GO" id="GO:0003924">
    <property type="term" value="F:GTPase activity"/>
    <property type="evidence" value="ECO:0007669"/>
    <property type="project" value="UniProtKB-UniRule"/>
</dbReference>
<dbReference type="GO" id="GO:0097216">
    <property type="term" value="F:guanosine tetraphosphate binding"/>
    <property type="evidence" value="ECO:0007669"/>
    <property type="project" value="UniProtKB-ARBA"/>
</dbReference>
<dbReference type="GO" id="GO:0043022">
    <property type="term" value="F:ribosome binding"/>
    <property type="evidence" value="ECO:0007669"/>
    <property type="project" value="UniProtKB-UniRule"/>
</dbReference>
<dbReference type="GO" id="GO:0003746">
    <property type="term" value="F:translation elongation factor activity"/>
    <property type="evidence" value="ECO:0007669"/>
    <property type="project" value="UniProtKB-UniRule"/>
</dbReference>
<dbReference type="GO" id="GO:0045727">
    <property type="term" value="P:positive regulation of translation"/>
    <property type="evidence" value="ECO:0007669"/>
    <property type="project" value="UniProtKB-UniRule"/>
</dbReference>
<dbReference type="CDD" id="cd03699">
    <property type="entry name" value="EF4_II"/>
    <property type="match status" value="1"/>
</dbReference>
<dbReference type="CDD" id="cd16260">
    <property type="entry name" value="EF4_III"/>
    <property type="match status" value="1"/>
</dbReference>
<dbReference type="CDD" id="cd01890">
    <property type="entry name" value="LepA"/>
    <property type="match status" value="1"/>
</dbReference>
<dbReference type="CDD" id="cd03709">
    <property type="entry name" value="lepA_C"/>
    <property type="match status" value="1"/>
</dbReference>
<dbReference type="FunFam" id="3.40.50.300:FF:000078">
    <property type="entry name" value="Elongation factor 4"/>
    <property type="match status" value="1"/>
</dbReference>
<dbReference type="FunFam" id="2.40.30.10:FF:000015">
    <property type="entry name" value="Translation factor GUF1, mitochondrial"/>
    <property type="match status" value="1"/>
</dbReference>
<dbReference type="FunFam" id="3.30.70.240:FF:000007">
    <property type="entry name" value="Translation factor GUF1, mitochondrial"/>
    <property type="match status" value="1"/>
</dbReference>
<dbReference type="FunFam" id="3.30.70.2570:FF:000001">
    <property type="entry name" value="Translation factor GUF1, mitochondrial"/>
    <property type="match status" value="1"/>
</dbReference>
<dbReference type="FunFam" id="3.30.70.870:FF:000004">
    <property type="entry name" value="Translation factor GUF1, mitochondrial"/>
    <property type="match status" value="1"/>
</dbReference>
<dbReference type="Gene3D" id="3.30.70.240">
    <property type="match status" value="1"/>
</dbReference>
<dbReference type="Gene3D" id="3.30.70.2570">
    <property type="entry name" value="Elongation factor 4, C-terminal domain"/>
    <property type="match status" value="1"/>
</dbReference>
<dbReference type="Gene3D" id="3.30.70.870">
    <property type="entry name" value="Elongation Factor G (Translational Gtpase), domain 3"/>
    <property type="match status" value="1"/>
</dbReference>
<dbReference type="Gene3D" id="3.40.50.300">
    <property type="entry name" value="P-loop containing nucleotide triphosphate hydrolases"/>
    <property type="match status" value="1"/>
</dbReference>
<dbReference type="Gene3D" id="2.40.30.10">
    <property type="entry name" value="Translation factors"/>
    <property type="match status" value="1"/>
</dbReference>
<dbReference type="HAMAP" id="MF_00071">
    <property type="entry name" value="LepA"/>
    <property type="match status" value="1"/>
</dbReference>
<dbReference type="InterPro" id="IPR006297">
    <property type="entry name" value="EF-4"/>
</dbReference>
<dbReference type="InterPro" id="IPR035647">
    <property type="entry name" value="EFG_III/V"/>
</dbReference>
<dbReference type="InterPro" id="IPR000640">
    <property type="entry name" value="EFG_V-like"/>
</dbReference>
<dbReference type="InterPro" id="IPR004161">
    <property type="entry name" value="EFTu-like_2"/>
</dbReference>
<dbReference type="InterPro" id="IPR031157">
    <property type="entry name" value="G_TR_CS"/>
</dbReference>
<dbReference type="InterPro" id="IPR038363">
    <property type="entry name" value="LepA_C_sf"/>
</dbReference>
<dbReference type="InterPro" id="IPR013842">
    <property type="entry name" value="LepA_CTD"/>
</dbReference>
<dbReference type="InterPro" id="IPR035654">
    <property type="entry name" value="LepA_IV"/>
</dbReference>
<dbReference type="InterPro" id="IPR027417">
    <property type="entry name" value="P-loop_NTPase"/>
</dbReference>
<dbReference type="InterPro" id="IPR005225">
    <property type="entry name" value="Small_GTP-bd"/>
</dbReference>
<dbReference type="InterPro" id="IPR000795">
    <property type="entry name" value="T_Tr_GTP-bd_dom"/>
</dbReference>
<dbReference type="NCBIfam" id="TIGR01393">
    <property type="entry name" value="lepA"/>
    <property type="match status" value="1"/>
</dbReference>
<dbReference type="NCBIfam" id="TIGR00231">
    <property type="entry name" value="small_GTP"/>
    <property type="match status" value="1"/>
</dbReference>
<dbReference type="PANTHER" id="PTHR43512:SF4">
    <property type="entry name" value="TRANSLATION FACTOR GUF1 HOMOLOG, CHLOROPLASTIC"/>
    <property type="match status" value="1"/>
</dbReference>
<dbReference type="PANTHER" id="PTHR43512">
    <property type="entry name" value="TRANSLATION FACTOR GUF1-RELATED"/>
    <property type="match status" value="1"/>
</dbReference>
<dbReference type="Pfam" id="PF00679">
    <property type="entry name" value="EFG_C"/>
    <property type="match status" value="1"/>
</dbReference>
<dbReference type="Pfam" id="PF00009">
    <property type="entry name" value="GTP_EFTU"/>
    <property type="match status" value="1"/>
</dbReference>
<dbReference type="Pfam" id="PF03144">
    <property type="entry name" value="GTP_EFTU_D2"/>
    <property type="match status" value="1"/>
</dbReference>
<dbReference type="Pfam" id="PF06421">
    <property type="entry name" value="LepA_C"/>
    <property type="match status" value="1"/>
</dbReference>
<dbReference type="PRINTS" id="PR00315">
    <property type="entry name" value="ELONGATNFCT"/>
</dbReference>
<dbReference type="SMART" id="SM00838">
    <property type="entry name" value="EFG_C"/>
    <property type="match status" value="1"/>
</dbReference>
<dbReference type="SUPFAM" id="SSF54980">
    <property type="entry name" value="EF-G C-terminal domain-like"/>
    <property type="match status" value="2"/>
</dbReference>
<dbReference type="SUPFAM" id="SSF52540">
    <property type="entry name" value="P-loop containing nucleoside triphosphate hydrolases"/>
    <property type="match status" value="1"/>
</dbReference>
<dbReference type="PROSITE" id="PS00301">
    <property type="entry name" value="G_TR_1"/>
    <property type="match status" value="1"/>
</dbReference>
<dbReference type="PROSITE" id="PS51722">
    <property type="entry name" value="G_TR_2"/>
    <property type="match status" value="1"/>
</dbReference>
<reference key="1">
    <citation type="journal article" date="2008" name="PLoS ONE">
        <title>Comparative analysis of Acinetobacters: three genomes for three lifestyles.</title>
        <authorList>
            <person name="Vallenet D."/>
            <person name="Nordmann P."/>
            <person name="Barbe V."/>
            <person name="Poirel L."/>
            <person name="Mangenot S."/>
            <person name="Bataille E."/>
            <person name="Dossat C."/>
            <person name="Gas S."/>
            <person name="Kreimeyer A."/>
            <person name="Lenoble P."/>
            <person name="Oztas S."/>
            <person name="Poulain J."/>
            <person name="Segurens B."/>
            <person name="Robert C."/>
            <person name="Abergel C."/>
            <person name="Claverie J.-M."/>
            <person name="Raoult D."/>
            <person name="Medigue C."/>
            <person name="Weissenbach J."/>
            <person name="Cruveiller S."/>
        </authorList>
    </citation>
    <scope>NUCLEOTIDE SEQUENCE [LARGE SCALE GENOMIC DNA]</scope>
    <source>
        <strain>AYE</strain>
    </source>
</reference>
<feature type="chain" id="PRO_1000092366" description="Elongation factor 4">
    <location>
        <begin position="1"/>
        <end position="605"/>
    </location>
</feature>
<feature type="domain" description="tr-type G">
    <location>
        <begin position="11"/>
        <end position="193"/>
    </location>
</feature>
<feature type="binding site" evidence="1">
    <location>
        <begin position="23"/>
        <end position="28"/>
    </location>
    <ligand>
        <name>GTP</name>
        <dbReference type="ChEBI" id="CHEBI:37565"/>
    </ligand>
</feature>
<feature type="binding site" evidence="1">
    <location>
        <begin position="140"/>
        <end position="143"/>
    </location>
    <ligand>
        <name>GTP</name>
        <dbReference type="ChEBI" id="CHEBI:37565"/>
    </ligand>
</feature>
<keyword id="KW-0997">Cell inner membrane</keyword>
<keyword id="KW-1003">Cell membrane</keyword>
<keyword id="KW-0342">GTP-binding</keyword>
<keyword id="KW-0378">Hydrolase</keyword>
<keyword id="KW-0472">Membrane</keyword>
<keyword id="KW-0547">Nucleotide-binding</keyword>
<keyword id="KW-0648">Protein biosynthesis</keyword>
<protein>
    <recommendedName>
        <fullName evidence="1">Elongation factor 4</fullName>
        <shortName evidence="1">EF-4</shortName>
        <ecNumber evidence="1">3.6.5.n1</ecNumber>
    </recommendedName>
    <alternativeName>
        <fullName evidence="1">Ribosomal back-translocase LepA</fullName>
    </alternativeName>
</protein>
<accession>B0VCT7</accession>
<proteinExistence type="inferred from homology"/>
<organism>
    <name type="scientific">Acinetobacter baumannii (strain AYE)</name>
    <dbReference type="NCBI Taxonomy" id="509173"/>
    <lineage>
        <taxon>Bacteria</taxon>
        <taxon>Pseudomonadati</taxon>
        <taxon>Pseudomonadota</taxon>
        <taxon>Gammaproteobacteria</taxon>
        <taxon>Moraxellales</taxon>
        <taxon>Moraxellaceae</taxon>
        <taxon>Acinetobacter</taxon>
        <taxon>Acinetobacter calcoaceticus/baumannii complex</taxon>
    </lineage>
</organism>
<comment type="function">
    <text evidence="1">Required for accurate and efficient protein synthesis under certain stress conditions. May act as a fidelity factor of the translation reaction, by catalyzing a one-codon backward translocation of tRNAs on improperly translocated ribosomes. Back-translocation proceeds from a post-translocation (POST) complex to a pre-translocation (PRE) complex, thus giving elongation factor G a second chance to translocate the tRNAs correctly. Binds to ribosomes in a GTP-dependent manner.</text>
</comment>
<comment type="catalytic activity">
    <reaction evidence="1">
        <text>GTP + H2O = GDP + phosphate + H(+)</text>
        <dbReference type="Rhea" id="RHEA:19669"/>
        <dbReference type="ChEBI" id="CHEBI:15377"/>
        <dbReference type="ChEBI" id="CHEBI:15378"/>
        <dbReference type="ChEBI" id="CHEBI:37565"/>
        <dbReference type="ChEBI" id="CHEBI:43474"/>
        <dbReference type="ChEBI" id="CHEBI:58189"/>
        <dbReference type="EC" id="3.6.5.n1"/>
    </reaction>
</comment>
<comment type="subcellular location">
    <subcellularLocation>
        <location evidence="1">Cell inner membrane</location>
        <topology evidence="1">Peripheral membrane protein</topology>
        <orientation evidence="1">Cytoplasmic side</orientation>
    </subcellularLocation>
</comment>
<comment type="similarity">
    <text evidence="1">Belongs to the TRAFAC class translation factor GTPase superfamily. Classic translation factor GTPase family. LepA subfamily.</text>
</comment>
<name>LEPA_ACIBY</name>
<evidence type="ECO:0000255" key="1">
    <source>
        <dbReference type="HAMAP-Rule" id="MF_00071"/>
    </source>
</evidence>